<comment type="function">
    <text evidence="1">Binds directly to 23S ribosomal RNA and is necessary for the in vitro assembly process of the 50S ribosomal subunit. It is not involved in the protein synthesizing functions of that subunit.</text>
</comment>
<comment type="similarity">
    <text evidence="1">Belongs to the bacterial ribosomal protein bL20 family.</text>
</comment>
<evidence type="ECO:0000255" key="1">
    <source>
        <dbReference type="HAMAP-Rule" id="MF_00382"/>
    </source>
</evidence>
<evidence type="ECO:0000305" key="2"/>
<protein>
    <recommendedName>
        <fullName evidence="1">Large ribosomal subunit protein bL20</fullName>
    </recommendedName>
    <alternativeName>
        <fullName evidence="2">50S ribosomal protein L20</fullName>
    </alternativeName>
</protein>
<dbReference type="EMBL" id="CP000886">
    <property type="protein sequence ID" value="ABX67389.1"/>
    <property type="molecule type" value="Genomic_DNA"/>
</dbReference>
<dbReference type="RefSeq" id="WP_000124850.1">
    <property type="nucleotide sequence ID" value="NC_010102.1"/>
</dbReference>
<dbReference type="SMR" id="A9N240"/>
<dbReference type="GeneID" id="98388757"/>
<dbReference type="KEGG" id="spq:SPAB_02002"/>
<dbReference type="PATRIC" id="fig|1016998.12.peg.1890"/>
<dbReference type="HOGENOM" id="CLU_123265_0_1_6"/>
<dbReference type="BioCyc" id="SENT1016998:SPAB_RS08165-MONOMER"/>
<dbReference type="Proteomes" id="UP000008556">
    <property type="component" value="Chromosome"/>
</dbReference>
<dbReference type="GO" id="GO:1990904">
    <property type="term" value="C:ribonucleoprotein complex"/>
    <property type="evidence" value="ECO:0007669"/>
    <property type="project" value="UniProtKB-KW"/>
</dbReference>
<dbReference type="GO" id="GO:0005840">
    <property type="term" value="C:ribosome"/>
    <property type="evidence" value="ECO:0007669"/>
    <property type="project" value="UniProtKB-KW"/>
</dbReference>
<dbReference type="GO" id="GO:0019843">
    <property type="term" value="F:rRNA binding"/>
    <property type="evidence" value="ECO:0007669"/>
    <property type="project" value="UniProtKB-UniRule"/>
</dbReference>
<dbReference type="GO" id="GO:0003735">
    <property type="term" value="F:structural constituent of ribosome"/>
    <property type="evidence" value="ECO:0007669"/>
    <property type="project" value="InterPro"/>
</dbReference>
<dbReference type="GO" id="GO:0000027">
    <property type="term" value="P:ribosomal large subunit assembly"/>
    <property type="evidence" value="ECO:0007669"/>
    <property type="project" value="UniProtKB-UniRule"/>
</dbReference>
<dbReference type="GO" id="GO:0006412">
    <property type="term" value="P:translation"/>
    <property type="evidence" value="ECO:0007669"/>
    <property type="project" value="InterPro"/>
</dbReference>
<dbReference type="CDD" id="cd07026">
    <property type="entry name" value="Ribosomal_L20"/>
    <property type="match status" value="1"/>
</dbReference>
<dbReference type="FunFam" id="1.10.1900.20:FF:000001">
    <property type="entry name" value="50S ribosomal protein L20"/>
    <property type="match status" value="1"/>
</dbReference>
<dbReference type="Gene3D" id="6.10.160.10">
    <property type="match status" value="1"/>
</dbReference>
<dbReference type="Gene3D" id="1.10.1900.20">
    <property type="entry name" value="Ribosomal protein L20"/>
    <property type="match status" value="1"/>
</dbReference>
<dbReference type="HAMAP" id="MF_00382">
    <property type="entry name" value="Ribosomal_bL20"/>
    <property type="match status" value="1"/>
</dbReference>
<dbReference type="InterPro" id="IPR005813">
    <property type="entry name" value="Ribosomal_bL20"/>
</dbReference>
<dbReference type="InterPro" id="IPR049946">
    <property type="entry name" value="RIBOSOMAL_L20_CS"/>
</dbReference>
<dbReference type="InterPro" id="IPR035566">
    <property type="entry name" value="Ribosomal_protein_bL20_C"/>
</dbReference>
<dbReference type="NCBIfam" id="TIGR01032">
    <property type="entry name" value="rplT_bact"/>
    <property type="match status" value="1"/>
</dbReference>
<dbReference type="PANTHER" id="PTHR10986">
    <property type="entry name" value="39S RIBOSOMAL PROTEIN L20"/>
    <property type="match status" value="1"/>
</dbReference>
<dbReference type="Pfam" id="PF00453">
    <property type="entry name" value="Ribosomal_L20"/>
    <property type="match status" value="1"/>
</dbReference>
<dbReference type="PRINTS" id="PR00062">
    <property type="entry name" value="RIBOSOMALL20"/>
</dbReference>
<dbReference type="SUPFAM" id="SSF74731">
    <property type="entry name" value="Ribosomal protein L20"/>
    <property type="match status" value="1"/>
</dbReference>
<dbReference type="PROSITE" id="PS00937">
    <property type="entry name" value="RIBOSOMAL_L20"/>
    <property type="match status" value="1"/>
</dbReference>
<keyword id="KW-0687">Ribonucleoprotein</keyword>
<keyword id="KW-0689">Ribosomal protein</keyword>
<keyword id="KW-0694">RNA-binding</keyword>
<keyword id="KW-0699">rRNA-binding</keyword>
<accession>A9N240</accession>
<gene>
    <name evidence="1" type="primary">rplT</name>
    <name type="ordered locus">SPAB_02002</name>
</gene>
<name>RL20_SALPB</name>
<organism>
    <name type="scientific">Salmonella paratyphi B (strain ATCC BAA-1250 / SPB7)</name>
    <dbReference type="NCBI Taxonomy" id="1016998"/>
    <lineage>
        <taxon>Bacteria</taxon>
        <taxon>Pseudomonadati</taxon>
        <taxon>Pseudomonadota</taxon>
        <taxon>Gammaproteobacteria</taxon>
        <taxon>Enterobacterales</taxon>
        <taxon>Enterobacteriaceae</taxon>
        <taxon>Salmonella</taxon>
    </lineage>
</organism>
<proteinExistence type="inferred from homology"/>
<feature type="chain" id="PRO_1000080092" description="Large ribosomal subunit protein bL20">
    <location>
        <begin position="1"/>
        <end position="118"/>
    </location>
</feature>
<reference key="1">
    <citation type="submission" date="2007-11" db="EMBL/GenBank/DDBJ databases">
        <authorList>
            <consortium name="The Salmonella enterica serovar Paratyphi B Genome Sequencing Project"/>
            <person name="McClelland M."/>
            <person name="Sanderson E.K."/>
            <person name="Porwollik S."/>
            <person name="Spieth J."/>
            <person name="Clifton W.S."/>
            <person name="Fulton R."/>
            <person name="Cordes M."/>
            <person name="Wollam A."/>
            <person name="Shah N."/>
            <person name="Pepin K."/>
            <person name="Bhonagiri V."/>
            <person name="Nash W."/>
            <person name="Johnson M."/>
            <person name="Thiruvilangam P."/>
            <person name="Wilson R."/>
        </authorList>
    </citation>
    <scope>NUCLEOTIDE SEQUENCE [LARGE SCALE GENOMIC DNA]</scope>
    <source>
        <strain>ATCC BAA-1250 / SPB7</strain>
    </source>
</reference>
<sequence>MARVKRGVIARARHKKILKQAKGYYGARSRVYRVAFQAVIKAGQYAYRDRRQRKRQFRQLWIARINAAARQNGISYSKFINGLKKASVEIDRKILADIAVFDKVAFTALVEKAKAALA</sequence>